<evidence type="ECO:0000250" key="1"/>
<evidence type="ECO:0000255" key="2">
    <source>
        <dbReference type="HAMAP-Rule" id="MF_01368"/>
    </source>
</evidence>
<evidence type="ECO:0000269" key="3">
    <source>
    </source>
</evidence>
<evidence type="ECO:0000305" key="4"/>
<evidence type="ECO:0007744" key="5">
    <source>
        <dbReference type="PDB" id="6HA1"/>
    </source>
</evidence>
<evidence type="ECO:0007744" key="6">
    <source>
        <dbReference type="PDB" id="6HA8"/>
    </source>
</evidence>
<evidence type="ECO:0007829" key="7">
    <source>
        <dbReference type="PDB" id="7SAE"/>
    </source>
</evidence>
<evidence type="ECO:0007829" key="8">
    <source>
        <dbReference type="PDB" id="8S1P"/>
    </source>
</evidence>
<organism>
    <name type="scientific">Bacillus subtilis (strain 168)</name>
    <dbReference type="NCBI Taxonomy" id="224308"/>
    <lineage>
        <taxon>Bacteria</taxon>
        <taxon>Bacillati</taxon>
        <taxon>Bacillota</taxon>
        <taxon>Bacilli</taxon>
        <taxon>Bacillales</taxon>
        <taxon>Bacillaceae</taxon>
        <taxon>Bacillus</taxon>
    </lineage>
</organism>
<comment type="subunit">
    <text evidence="2 3">Part of the 50S ribosomal subunit (PubMed:30126986). Contacts protein L32 (By similarity).</text>
</comment>
<comment type="similarity">
    <text evidence="2">Belongs to the bacterial ribosomal protein bL17 family.</text>
</comment>
<reference key="1">
    <citation type="journal article" date="1989" name="J. Bacteriol.">
        <title>Gene encoding the alpha core subunit of Bacillus subtilis RNA polymerase is cotranscribed with the genes for initiation factor 1 and ribosomal proteins B, S13, S11, and L17.</title>
        <authorList>
            <person name="Boylan S.A."/>
            <person name="Suh J.-W."/>
            <person name="Thomas S.M."/>
            <person name="Price C.W."/>
        </authorList>
    </citation>
    <scope>NUCLEOTIDE SEQUENCE [GENOMIC DNA]</scope>
</reference>
<reference key="2">
    <citation type="journal article" date="1996" name="Gene">
        <title>Genetic and transcriptional organization of the Bacillus subtilis spc-alpha region.</title>
        <authorList>
            <person name="Suh J.-W."/>
            <person name="Boylan S.A."/>
            <person name="Oh S.H."/>
            <person name="Price C.W."/>
        </authorList>
    </citation>
    <scope>NUCLEOTIDE SEQUENCE [GENOMIC DNA]</scope>
    <source>
        <strain>168 / Marburg / ATCC 6051 / DSM 10 / JCM 1465 / NBRC 13719 / NCIMB 3610 / NRRL NRS-744 / VKM B-501</strain>
    </source>
</reference>
<reference key="3">
    <citation type="journal article" date="1997" name="Nature">
        <title>The complete genome sequence of the Gram-positive bacterium Bacillus subtilis.</title>
        <authorList>
            <person name="Kunst F."/>
            <person name="Ogasawara N."/>
            <person name="Moszer I."/>
            <person name="Albertini A.M."/>
            <person name="Alloni G."/>
            <person name="Azevedo V."/>
            <person name="Bertero M.G."/>
            <person name="Bessieres P."/>
            <person name="Bolotin A."/>
            <person name="Borchert S."/>
            <person name="Borriss R."/>
            <person name="Boursier L."/>
            <person name="Brans A."/>
            <person name="Braun M."/>
            <person name="Brignell S.C."/>
            <person name="Bron S."/>
            <person name="Brouillet S."/>
            <person name="Bruschi C.V."/>
            <person name="Caldwell B."/>
            <person name="Capuano V."/>
            <person name="Carter N.M."/>
            <person name="Choi S.-K."/>
            <person name="Codani J.-J."/>
            <person name="Connerton I.F."/>
            <person name="Cummings N.J."/>
            <person name="Daniel R.A."/>
            <person name="Denizot F."/>
            <person name="Devine K.M."/>
            <person name="Duesterhoeft A."/>
            <person name="Ehrlich S.D."/>
            <person name="Emmerson P.T."/>
            <person name="Entian K.-D."/>
            <person name="Errington J."/>
            <person name="Fabret C."/>
            <person name="Ferrari E."/>
            <person name="Foulger D."/>
            <person name="Fritz C."/>
            <person name="Fujita M."/>
            <person name="Fujita Y."/>
            <person name="Fuma S."/>
            <person name="Galizzi A."/>
            <person name="Galleron N."/>
            <person name="Ghim S.-Y."/>
            <person name="Glaser P."/>
            <person name="Goffeau A."/>
            <person name="Golightly E.J."/>
            <person name="Grandi G."/>
            <person name="Guiseppi G."/>
            <person name="Guy B.J."/>
            <person name="Haga K."/>
            <person name="Haiech J."/>
            <person name="Harwood C.R."/>
            <person name="Henaut A."/>
            <person name="Hilbert H."/>
            <person name="Holsappel S."/>
            <person name="Hosono S."/>
            <person name="Hullo M.-F."/>
            <person name="Itaya M."/>
            <person name="Jones L.-M."/>
            <person name="Joris B."/>
            <person name="Karamata D."/>
            <person name="Kasahara Y."/>
            <person name="Klaerr-Blanchard M."/>
            <person name="Klein C."/>
            <person name="Kobayashi Y."/>
            <person name="Koetter P."/>
            <person name="Koningstein G."/>
            <person name="Krogh S."/>
            <person name="Kumano M."/>
            <person name="Kurita K."/>
            <person name="Lapidus A."/>
            <person name="Lardinois S."/>
            <person name="Lauber J."/>
            <person name="Lazarevic V."/>
            <person name="Lee S.-M."/>
            <person name="Levine A."/>
            <person name="Liu H."/>
            <person name="Masuda S."/>
            <person name="Mauel C."/>
            <person name="Medigue C."/>
            <person name="Medina N."/>
            <person name="Mellado R.P."/>
            <person name="Mizuno M."/>
            <person name="Moestl D."/>
            <person name="Nakai S."/>
            <person name="Noback M."/>
            <person name="Noone D."/>
            <person name="O'Reilly M."/>
            <person name="Ogawa K."/>
            <person name="Ogiwara A."/>
            <person name="Oudega B."/>
            <person name="Park S.-H."/>
            <person name="Parro V."/>
            <person name="Pohl T.M."/>
            <person name="Portetelle D."/>
            <person name="Porwollik S."/>
            <person name="Prescott A.M."/>
            <person name="Presecan E."/>
            <person name="Pujic P."/>
            <person name="Purnelle B."/>
            <person name="Rapoport G."/>
            <person name="Rey M."/>
            <person name="Reynolds S."/>
            <person name="Rieger M."/>
            <person name="Rivolta C."/>
            <person name="Rocha E."/>
            <person name="Roche B."/>
            <person name="Rose M."/>
            <person name="Sadaie Y."/>
            <person name="Sato T."/>
            <person name="Scanlan E."/>
            <person name="Schleich S."/>
            <person name="Schroeter R."/>
            <person name="Scoffone F."/>
            <person name="Sekiguchi J."/>
            <person name="Sekowska A."/>
            <person name="Seror S.J."/>
            <person name="Serror P."/>
            <person name="Shin B.-S."/>
            <person name="Soldo B."/>
            <person name="Sorokin A."/>
            <person name="Tacconi E."/>
            <person name="Takagi T."/>
            <person name="Takahashi H."/>
            <person name="Takemaru K."/>
            <person name="Takeuchi M."/>
            <person name="Tamakoshi A."/>
            <person name="Tanaka T."/>
            <person name="Terpstra P."/>
            <person name="Tognoni A."/>
            <person name="Tosato V."/>
            <person name="Uchiyama S."/>
            <person name="Vandenbol M."/>
            <person name="Vannier F."/>
            <person name="Vassarotti A."/>
            <person name="Viari A."/>
            <person name="Wambutt R."/>
            <person name="Wedler E."/>
            <person name="Wedler H."/>
            <person name="Weitzenegger T."/>
            <person name="Winters P."/>
            <person name="Wipat A."/>
            <person name="Yamamoto H."/>
            <person name="Yamane K."/>
            <person name="Yasumoto K."/>
            <person name="Yata K."/>
            <person name="Yoshida K."/>
            <person name="Yoshikawa H.-F."/>
            <person name="Zumstein E."/>
            <person name="Yoshikawa H."/>
            <person name="Danchin A."/>
        </authorList>
    </citation>
    <scope>NUCLEOTIDE SEQUENCE [LARGE SCALE GENOMIC DNA]</scope>
    <source>
        <strain>168</strain>
    </source>
</reference>
<reference evidence="5 6" key="4">
    <citation type="journal article" date="2018" name="Proc. Natl. Acad. Sci. U.S.A.">
        <title>Structural basis for antibiotic resistance mediated by the Bacillus subtilis ABCF ATPase VmlR.</title>
        <authorList>
            <person name="Crowe-McAuliffe C."/>
            <person name="Graf M."/>
            <person name="Huter P."/>
            <person name="Takada H."/>
            <person name="Abdelshahid M."/>
            <person name="Novacek J."/>
            <person name="Murina V."/>
            <person name="Atkinson G.C."/>
            <person name="Hauryliuk V."/>
            <person name="Wilson D.N."/>
        </authorList>
    </citation>
    <scope>STRUCTURE BY ELECTRON MICROSCOPY (3.10 ANGSTROMS) OF 1-120 WITH AND WITHOUT VIRGINIAMYCIN M</scope>
</reference>
<proteinExistence type="evidence at protein level"/>
<accession>P20277</accession>
<keyword id="KW-0002">3D-structure</keyword>
<keyword id="KW-1185">Reference proteome</keyword>
<keyword id="KW-0687">Ribonucleoprotein</keyword>
<keyword id="KW-0689">Ribosomal protein</keyword>
<sequence>MSYRKLGRTSAQRKAMLRDLTTDLIINERIETTETRAKELRSVVEKMITLGKRGDLHARRQAAAYIRNEVANEENNQDALQKLFSDIATRYEERQGGYTRIMKLGPRRGDGAPMAIIELV</sequence>
<dbReference type="EMBL" id="M26414">
    <property type="protein sequence ID" value="AAA22218.1"/>
    <property type="molecule type" value="Genomic_DNA"/>
</dbReference>
<dbReference type="EMBL" id="L47971">
    <property type="protein sequence ID" value="AAB06827.1"/>
    <property type="molecule type" value="Genomic_DNA"/>
</dbReference>
<dbReference type="EMBL" id="AL009126">
    <property type="protein sequence ID" value="CAB11920.1"/>
    <property type="molecule type" value="Genomic_DNA"/>
</dbReference>
<dbReference type="PIR" id="F32307">
    <property type="entry name" value="F32307"/>
</dbReference>
<dbReference type="RefSeq" id="NP_388025.1">
    <property type="nucleotide sequence ID" value="NC_000964.3"/>
</dbReference>
<dbReference type="RefSeq" id="WP_003225836.1">
    <property type="nucleotide sequence ID" value="NZ_OZ025638.1"/>
</dbReference>
<dbReference type="PDB" id="3J3V">
    <property type="method" value="EM"/>
    <property type="resolution" value="13.30 A"/>
    <property type="chains" value="N=1-120"/>
</dbReference>
<dbReference type="PDB" id="3J3W">
    <property type="method" value="EM"/>
    <property type="resolution" value="10.70 A"/>
    <property type="chains" value="N=1-120"/>
</dbReference>
<dbReference type="PDB" id="3J9W">
    <property type="method" value="EM"/>
    <property type="resolution" value="3.90 A"/>
    <property type="chains" value="BQ=1-120"/>
</dbReference>
<dbReference type="PDB" id="5NJT">
    <property type="method" value="EM"/>
    <property type="resolution" value="3.80 A"/>
    <property type="chains" value="g=2-120"/>
</dbReference>
<dbReference type="PDB" id="6HA1">
    <property type="method" value="EM"/>
    <property type="resolution" value="3.10 A"/>
    <property type="chains" value="N=1-120"/>
</dbReference>
<dbReference type="PDB" id="6HA8">
    <property type="method" value="EM"/>
    <property type="resolution" value="3.50 A"/>
    <property type="chains" value="N=1-120"/>
</dbReference>
<dbReference type="PDB" id="6HTQ">
    <property type="method" value="EM"/>
    <property type="resolution" value="4.50 A"/>
    <property type="chains" value="N=2-120"/>
</dbReference>
<dbReference type="PDB" id="6PPF">
    <property type="method" value="EM"/>
    <property type="resolution" value="3.40 A"/>
    <property type="chains" value="N=1-120"/>
</dbReference>
<dbReference type="PDB" id="6PPK">
    <property type="method" value="EM"/>
    <property type="resolution" value="4.40 A"/>
    <property type="chains" value="N=1-120"/>
</dbReference>
<dbReference type="PDB" id="6PVK">
    <property type="method" value="EM"/>
    <property type="resolution" value="3.40 A"/>
    <property type="chains" value="N=1-120"/>
</dbReference>
<dbReference type="PDB" id="6TNN">
    <property type="method" value="EM"/>
    <property type="resolution" value="3.07 A"/>
    <property type="chains" value="g=1-120"/>
</dbReference>
<dbReference type="PDB" id="6TPQ">
    <property type="method" value="EM"/>
    <property type="resolution" value="3.07 A"/>
    <property type="chains" value="g=1-120"/>
</dbReference>
<dbReference type="PDB" id="7AQC">
    <property type="method" value="EM"/>
    <property type="resolution" value="2.99 A"/>
    <property type="chains" value="N=1-120"/>
</dbReference>
<dbReference type="PDB" id="7AQD">
    <property type="method" value="EM"/>
    <property type="resolution" value="3.10 A"/>
    <property type="chains" value="N=1-120"/>
</dbReference>
<dbReference type="PDB" id="7AS8">
    <property type="method" value="EM"/>
    <property type="resolution" value="2.90 A"/>
    <property type="chains" value="R=1-120"/>
</dbReference>
<dbReference type="PDB" id="7AS9">
    <property type="method" value="EM"/>
    <property type="resolution" value="3.50 A"/>
    <property type="chains" value="R=1-120"/>
</dbReference>
<dbReference type="PDB" id="7O5B">
    <property type="method" value="EM"/>
    <property type="resolution" value="3.33 A"/>
    <property type="chains" value="k=1-120"/>
</dbReference>
<dbReference type="PDB" id="7OPE">
    <property type="method" value="EM"/>
    <property type="resolution" value="3.20 A"/>
    <property type="chains" value="R=1-120"/>
</dbReference>
<dbReference type="PDB" id="7QGU">
    <property type="method" value="EM"/>
    <property type="resolution" value="4.75 A"/>
    <property type="chains" value="N=1-120"/>
</dbReference>
<dbReference type="PDB" id="7QH4">
    <property type="method" value="EM"/>
    <property type="resolution" value="5.45 A"/>
    <property type="chains" value="N=1-120"/>
</dbReference>
<dbReference type="PDB" id="7QV1">
    <property type="method" value="EM"/>
    <property type="resolution" value="3.50 A"/>
    <property type="chains" value="N=1-120"/>
</dbReference>
<dbReference type="PDB" id="7QV2">
    <property type="method" value="EM"/>
    <property type="resolution" value="3.50 A"/>
    <property type="chains" value="N=1-120"/>
</dbReference>
<dbReference type="PDB" id="7QV3">
    <property type="method" value="EM"/>
    <property type="resolution" value="5.14 A"/>
    <property type="chains" value="N=1-120"/>
</dbReference>
<dbReference type="PDB" id="7S9U">
    <property type="method" value="EM"/>
    <property type="resolution" value="3.20 A"/>
    <property type="chains" value="N=1-120"/>
</dbReference>
<dbReference type="PDB" id="7SAE">
    <property type="method" value="EM"/>
    <property type="resolution" value="3.00 A"/>
    <property type="chains" value="N=1-120"/>
</dbReference>
<dbReference type="PDB" id="8BUU">
    <property type="method" value="EM"/>
    <property type="resolution" value="2.90 A"/>
    <property type="chains" value="N=1-120"/>
</dbReference>
<dbReference type="PDB" id="8QCQ">
    <property type="method" value="EM"/>
    <property type="resolution" value="2.30 A"/>
    <property type="chains" value="N=1-120"/>
</dbReference>
<dbReference type="PDB" id="8QPP">
    <property type="method" value="EM"/>
    <property type="resolution" value="3.40 A"/>
    <property type="chains" value="k=2-120"/>
</dbReference>
<dbReference type="PDB" id="8R55">
    <property type="method" value="EM"/>
    <property type="resolution" value="3.57 A"/>
    <property type="chains" value="k=2-120"/>
</dbReference>
<dbReference type="PDB" id="8S1P">
    <property type="method" value="EM"/>
    <property type="resolution" value="1.96 A"/>
    <property type="chains" value="N=1-120"/>
</dbReference>
<dbReference type="PDB" id="8S1U">
    <property type="method" value="EM"/>
    <property type="resolution" value="3.40 A"/>
    <property type="chains" value="N=1-120"/>
</dbReference>
<dbReference type="PDB" id="9BS0">
    <property type="method" value="EM"/>
    <property type="resolution" value="3.30 A"/>
    <property type="chains" value="J=1-120"/>
</dbReference>
<dbReference type="PDB" id="9BSL">
    <property type="method" value="EM"/>
    <property type="resolution" value="3.10 A"/>
    <property type="chains" value="J=1-120"/>
</dbReference>
<dbReference type="PDB" id="9BSS">
    <property type="method" value="EM"/>
    <property type="resolution" value="3.10 A"/>
    <property type="chains" value="J=1-120"/>
</dbReference>
<dbReference type="PDBsum" id="3J3V"/>
<dbReference type="PDBsum" id="3J3W"/>
<dbReference type="PDBsum" id="3J9W"/>
<dbReference type="PDBsum" id="5NJT"/>
<dbReference type="PDBsum" id="6HA1"/>
<dbReference type="PDBsum" id="6HA8"/>
<dbReference type="PDBsum" id="6HTQ"/>
<dbReference type="PDBsum" id="6PPF"/>
<dbReference type="PDBsum" id="6PPK"/>
<dbReference type="PDBsum" id="6PVK"/>
<dbReference type="PDBsum" id="6TNN"/>
<dbReference type="PDBsum" id="6TPQ"/>
<dbReference type="PDBsum" id="7AQC"/>
<dbReference type="PDBsum" id="7AQD"/>
<dbReference type="PDBsum" id="7AS8"/>
<dbReference type="PDBsum" id="7AS9"/>
<dbReference type="PDBsum" id="7O5B"/>
<dbReference type="PDBsum" id="7OPE"/>
<dbReference type="PDBsum" id="7QGU"/>
<dbReference type="PDBsum" id="7QH4"/>
<dbReference type="PDBsum" id="7QV1"/>
<dbReference type="PDBsum" id="7QV2"/>
<dbReference type="PDBsum" id="7QV3"/>
<dbReference type="PDBsum" id="7S9U"/>
<dbReference type="PDBsum" id="7SAE"/>
<dbReference type="PDBsum" id="8BUU"/>
<dbReference type="PDBsum" id="8QCQ"/>
<dbReference type="PDBsum" id="8QPP"/>
<dbReference type="PDBsum" id="8R55"/>
<dbReference type="PDBsum" id="8S1P"/>
<dbReference type="PDBsum" id="8S1U"/>
<dbReference type="PDBsum" id="9BS0"/>
<dbReference type="PDBsum" id="9BSL"/>
<dbReference type="PDBsum" id="9BSS"/>
<dbReference type="EMDB" id="EMD-0176"/>
<dbReference type="EMDB" id="EMD-0177"/>
<dbReference type="EMDB" id="EMD-0270"/>
<dbReference type="EMDB" id="EMD-10535"/>
<dbReference type="EMDB" id="EMD-10543"/>
<dbReference type="EMDB" id="EMD-11862"/>
<dbReference type="EMDB" id="EMD-11864"/>
<dbReference type="EMDB" id="EMD-11889"/>
<dbReference type="EMDB" id="EMD-11890"/>
<dbReference type="EMDB" id="EMD-12734"/>
<dbReference type="EMDB" id="EMD-13017"/>
<dbReference type="EMDB" id="EMD-14157"/>
<dbReference type="EMDB" id="EMD-14158"/>
<dbReference type="EMDB" id="EMD-14159"/>
<dbReference type="EMDB" id="EMD-16246"/>
<dbReference type="EMDB" id="EMD-18332"/>
<dbReference type="EMDB" id="EMD-19638"/>
<dbReference type="EMDB" id="EMD-19641"/>
<dbReference type="EMDB" id="EMD-3656"/>
<dbReference type="EMDB" id="EMD-44849"/>
<dbReference type="EMDB" id="EMD-44869"/>
<dbReference type="EMDB" id="EMD-44871"/>
<dbReference type="SMR" id="P20277"/>
<dbReference type="FunCoup" id="P20277">
    <property type="interactions" value="571"/>
</dbReference>
<dbReference type="IntAct" id="P20277">
    <property type="interactions" value="2"/>
</dbReference>
<dbReference type="MINT" id="P20277"/>
<dbReference type="STRING" id="224308.BSU01440"/>
<dbReference type="jPOST" id="P20277"/>
<dbReference type="PaxDb" id="224308-BSU01440"/>
<dbReference type="EnsemblBacteria" id="CAB11920">
    <property type="protein sequence ID" value="CAB11920"/>
    <property type="gene ID" value="BSU_01440"/>
</dbReference>
<dbReference type="GeneID" id="86875457"/>
<dbReference type="GeneID" id="938918"/>
<dbReference type="KEGG" id="bsu:BSU01440"/>
<dbReference type="PATRIC" id="fig|224308.179.peg.148"/>
<dbReference type="eggNOG" id="COG0203">
    <property type="taxonomic scope" value="Bacteria"/>
</dbReference>
<dbReference type="InParanoid" id="P20277"/>
<dbReference type="OrthoDB" id="9809073at2"/>
<dbReference type="PhylomeDB" id="P20277"/>
<dbReference type="BioCyc" id="BSUB:BSU01440-MONOMER"/>
<dbReference type="EvolutionaryTrace" id="P20277"/>
<dbReference type="PRO" id="PR:P20277"/>
<dbReference type="Proteomes" id="UP000001570">
    <property type="component" value="Chromosome"/>
</dbReference>
<dbReference type="GO" id="GO:0022625">
    <property type="term" value="C:cytosolic large ribosomal subunit"/>
    <property type="evidence" value="ECO:0000318"/>
    <property type="project" value="GO_Central"/>
</dbReference>
<dbReference type="GO" id="GO:0003735">
    <property type="term" value="F:structural constituent of ribosome"/>
    <property type="evidence" value="ECO:0000318"/>
    <property type="project" value="GO_Central"/>
</dbReference>
<dbReference type="GO" id="GO:0006412">
    <property type="term" value="P:translation"/>
    <property type="evidence" value="ECO:0007669"/>
    <property type="project" value="UniProtKB-UniRule"/>
</dbReference>
<dbReference type="FunFam" id="3.90.1030.10:FF:000002">
    <property type="entry name" value="50S ribosomal protein L17"/>
    <property type="match status" value="1"/>
</dbReference>
<dbReference type="Gene3D" id="3.90.1030.10">
    <property type="entry name" value="Ribosomal protein L17"/>
    <property type="match status" value="1"/>
</dbReference>
<dbReference type="HAMAP" id="MF_01368">
    <property type="entry name" value="Ribosomal_bL17"/>
    <property type="match status" value="1"/>
</dbReference>
<dbReference type="InterPro" id="IPR000456">
    <property type="entry name" value="Ribosomal_bL17"/>
</dbReference>
<dbReference type="InterPro" id="IPR047859">
    <property type="entry name" value="Ribosomal_bL17_CS"/>
</dbReference>
<dbReference type="InterPro" id="IPR036373">
    <property type="entry name" value="Ribosomal_bL17_sf"/>
</dbReference>
<dbReference type="NCBIfam" id="TIGR00059">
    <property type="entry name" value="L17"/>
    <property type="match status" value="1"/>
</dbReference>
<dbReference type="PANTHER" id="PTHR14413:SF16">
    <property type="entry name" value="LARGE RIBOSOMAL SUBUNIT PROTEIN BL17M"/>
    <property type="match status" value="1"/>
</dbReference>
<dbReference type="PANTHER" id="PTHR14413">
    <property type="entry name" value="RIBOSOMAL PROTEIN L17"/>
    <property type="match status" value="1"/>
</dbReference>
<dbReference type="Pfam" id="PF01196">
    <property type="entry name" value="Ribosomal_L17"/>
    <property type="match status" value="1"/>
</dbReference>
<dbReference type="SUPFAM" id="SSF64263">
    <property type="entry name" value="Prokaryotic ribosomal protein L17"/>
    <property type="match status" value="1"/>
</dbReference>
<dbReference type="PROSITE" id="PS01167">
    <property type="entry name" value="RIBOSOMAL_L17"/>
    <property type="match status" value="1"/>
</dbReference>
<name>RL17_BACSU</name>
<feature type="initiator methionine" description="Removed" evidence="1">
    <location>
        <position position="1"/>
    </location>
</feature>
<feature type="chain" id="PRO_0000175515" description="Large ribosomal subunit protein bL17">
    <location>
        <begin position="2"/>
        <end position="120"/>
    </location>
</feature>
<feature type="helix" evidence="8">
    <location>
        <begin position="10"/>
        <end position="27"/>
    </location>
</feature>
<feature type="strand" evidence="8">
    <location>
        <begin position="28"/>
        <end position="33"/>
    </location>
</feature>
<feature type="helix" evidence="8">
    <location>
        <begin position="34"/>
        <end position="53"/>
    </location>
</feature>
<feature type="helix" evidence="8">
    <location>
        <begin position="56"/>
        <end position="63"/>
    </location>
</feature>
<feature type="strand" evidence="8">
    <location>
        <begin position="70"/>
        <end position="72"/>
    </location>
</feature>
<feature type="turn" evidence="8">
    <location>
        <begin position="73"/>
        <end position="76"/>
    </location>
</feature>
<feature type="helix" evidence="8">
    <location>
        <begin position="79"/>
        <end position="90"/>
    </location>
</feature>
<feature type="strand" evidence="7">
    <location>
        <begin position="91"/>
        <end position="93"/>
    </location>
</feature>
<feature type="strand" evidence="8">
    <location>
        <begin position="99"/>
        <end position="106"/>
    </location>
</feature>
<feature type="turn" evidence="8">
    <location>
        <begin position="108"/>
        <end position="110"/>
    </location>
</feature>
<feature type="strand" evidence="8">
    <location>
        <begin position="113"/>
        <end position="119"/>
    </location>
</feature>
<gene>
    <name evidence="2" type="primary">rplQ</name>
    <name type="ordered locus">BSU01440</name>
</gene>
<protein>
    <recommendedName>
        <fullName evidence="2">Large ribosomal subunit protein bL17</fullName>
    </recommendedName>
    <alternativeName>
        <fullName evidence="4">50S ribosomal protein L17</fullName>
    </alternativeName>
    <alternativeName>
        <fullName>BL15</fullName>
    </alternativeName>
    <alternativeName>
        <fullName>BL21</fullName>
    </alternativeName>
</protein>